<accession>C0MBD4</accession>
<gene>
    <name evidence="1" type="primary">dltC</name>
    <name type="ordered locus">SEQ_1451</name>
</gene>
<comment type="function">
    <text evidence="1">Carrier protein involved in the D-alanylation of lipoteichoic acid (LTA). The loading of thioester-linked D-alanine onto DltC is catalyzed by D-alanine--D-alanyl carrier protein ligase DltA. The DltC-carried D-alanyl group is further transferred to cell membrane phosphatidylglycerol (PG) by forming an ester bond, probably catalyzed by DltD. D-alanylation of LTA plays an important role in modulating the properties of the cell wall in Gram-positive bacteria, influencing the net charge of the cell wall.</text>
</comment>
<comment type="pathway">
    <text evidence="1">Cell wall biogenesis; lipoteichoic acid biosynthesis.</text>
</comment>
<comment type="subcellular location">
    <subcellularLocation>
        <location evidence="1">Cytoplasm</location>
    </subcellularLocation>
</comment>
<comment type="PTM">
    <text evidence="1">4'-phosphopantetheine is transferred from CoA to a specific serine of apo-DCP.</text>
</comment>
<comment type="similarity">
    <text evidence="1">Belongs to the DltC family.</text>
</comment>
<reference key="1">
    <citation type="journal article" date="2009" name="PLoS Pathog.">
        <title>Genomic evidence for the evolution of Streptococcus equi: host restriction, increased virulence, and genetic exchange with human pathogens.</title>
        <authorList>
            <person name="Holden M.T.G."/>
            <person name="Heather Z."/>
            <person name="Paillot R."/>
            <person name="Steward K.F."/>
            <person name="Webb K."/>
            <person name="Ainslie F."/>
            <person name="Jourdan T."/>
            <person name="Bason N.C."/>
            <person name="Holroyd N.E."/>
            <person name="Mungall K."/>
            <person name="Quail M.A."/>
            <person name="Sanders M."/>
            <person name="Simmonds M."/>
            <person name="Willey D."/>
            <person name="Brooks K."/>
            <person name="Aanensen D.M."/>
            <person name="Spratt B.G."/>
            <person name="Jolley K.A."/>
            <person name="Maiden M.C.J."/>
            <person name="Kehoe M."/>
            <person name="Chanter N."/>
            <person name="Bentley S.D."/>
            <person name="Robinson C."/>
            <person name="Maskell D.J."/>
            <person name="Parkhill J."/>
            <person name="Waller A.S."/>
        </authorList>
    </citation>
    <scope>NUCLEOTIDE SEQUENCE [LARGE SCALE GENOMIC DNA]</scope>
    <source>
        <strain>4047</strain>
    </source>
</reference>
<proteinExistence type="inferred from homology"/>
<sequence>MSTKETVIDLFDRLFMEDVSDMMDEDLFDAGVLDSLGTVELIVEIESIFNIKVPISEFGREDWNTANKIIQGIEELQHA</sequence>
<protein>
    <recommendedName>
        <fullName evidence="1">D-alanyl carrier protein</fullName>
        <shortName evidence="1">DCP</shortName>
    </recommendedName>
    <alternativeName>
        <fullName evidence="1">D-alanine--poly(phosphoribitol) ligase subunit 2</fullName>
    </alternativeName>
</protein>
<feature type="chain" id="PRO_1000146796" description="D-alanyl carrier protein">
    <location>
        <begin position="1"/>
        <end position="79"/>
    </location>
</feature>
<feature type="domain" description="Carrier" evidence="1">
    <location>
        <begin position="1"/>
        <end position="77"/>
    </location>
</feature>
<feature type="modified residue" description="O-(pantetheine 4'-phosphoryl)serine" evidence="1">
    <location>
        <position position="35"/>
    </location>
</feature>
<name>DLTC_STRE4</name>
<evidence type="ECO:0000255" key="1">
    <source>
        <dbReference type="HAMAP-Rule" id="MF_00565"/>
    </source>
</evidence>
<dbReference type="EMBL" id="FM204883">
    <property type="protein sequence ID" value="CAW94339.1"/>
    <property type="molecule type" value="Genomic_DNA"/>
</dbReference>
<dbReference type="RefSeq" id="WP_012515872.1">
    <property type="nucleotide sequence ID" value="NC_012471.1"/>
</dbReference>
<dbReference type="SMR" id="C0MBD4"/>
<dbReference type="GeneID" id="83705151"/>
<dbReference type="KEGG" id="seu:SEQ_1451"/>
<dbReference type="HOGENOM" id="CLU_108696_19_0_9"/>
<dbReference type="OrthoDB" id="6462171at2"/>
<dbReference type="UniPathway" id="UPA00556"/>
<dbReference type="Proteomes" id="UP000001365">
    <property type="component" value="Chromosome"/>
</dbReference>
<dbReference type="GO" id="GO:0005737">
    <property type="term" value="C:cytoplasm"/>
    <property type="evidence" value="ECO:0007669"/>
    <property type="project" value="UniProtKB-SubCell"/>
</dbReference>
<dbReference type="GO" id="GO:0036370">
    <property type="term" value="F:D-alanyl carrier activity"/>
    <property type="evidence" value="ECO:0007669"/>
    <property type="project" value="UniProtKB-UniRule"/>
</dbReference>
<dbReference type="GO" id="GO:0071555">
    <property type="term" value="P:cell wall organization"/>
    <property type="evidence" value="ECO:0007669"/>
    <property type="project" value="UniProtKB-KW"/>
</dbReference>
<dbReference type="GO" id="GO:0070395">
    <property type="term" value="P:lipoteichoic acid biosynthetic process"/>
    <property type="evidence" value="ECO:0007669"/>
    <property type="project" value="UniProtKB-UniRule"/>
</dbReference>
<dbReference type="Gene3D" id="1.10.1200.10">
    <property type="entry name" value="ACP-like"/>
    <property type="match status" value="1"/>
</dbReference>
<dbReference type="HAMAP" id="MF_00565">
    <property type="entry name" value="DltC"/>
    <property type="match status" value="1"/>
</dbReference>
<dbReference type="InterPro" id="IPR036736">
    <property type="entry name" value="ACP-like_sf"/>
</dbReference>
<dbReference type="InterPro" id="IPR003230">
    <property type="entry name" value="DltC"/>
</dbReference>
<dbReference type="InterPro" id="IPR009081">
    <property type="entry name" value="PP-bd_ACP"/>
</dbReference>
<dbReference type="NCBIfam" id="TIGR01688">
    <property type="entry name" value="dltC"/>
    <property type="match status" value="1"/>
</dbReference>
<dbReference type="NCBIfam" id="NF003464">
    <property type="entry name" value="PRK05087.1"/>
    <property type="match status" value="1"/>
</dbReference>
<dbReference type="Pfam" id="PF00550">
    <property type="entry name" value="PP-binding"/>
    <property type="match status" value="1"/>
</dbReference>
<dbReference type="SUPFAM" id="SSF47336">
    <property type="entry name" value="ACP-like"/>
    <property type="match status" value="1"/>
</dbReference>
<dbReference type="PROSITE" id="PS50075">
    <property type="entry name" value="CARRIER"/>
    <property type="match status" value="1"/>
</dbReference>
<keyword id="KW-0961">Cell wall biogenesis/degradation</keyword>
<keyword id="KW-0963">Cytoplasm</keyword>
<keyword id="KW-0596">Phosphopantetheine</keyword>
<keyword id="KW-0597">Phosphoprotein</keyword>
<organism>
    <name type="scientific">Streptococcus equi subsp. equi (strain 4047)</name>
    <dbReference type="NCBI Taxonomy" id="553482"/>
    <lineage>
        <taxon>Bacteria</taxon>
        <taxon>Bacillati</taxon>
        <taxon>Bacillota</taxon>
        <taxon>Bacilli</taxon>
        <taxon>Lactobacillales</taxon>
        <taxon>Streptococcaceae</taxon>
        <taxon>Streptococcus</taxon>
    </lineage>
</organism>